<evidence type="ECO:0000250" key="1"/>
<evidence type="ECO:0000255" key="2">
    <source>
        <dbReference type="HAMAP-Rule" id="MF_03125"/>
    </source>
</evidence>
<gene>
    <name type="primary">purA</name>
    <name type="ORF">DDB_G0285429</name>
</gene>
<proteinExistence type="evidence at protein level"/>
<feature type="chain" id="PRO_0000095135" description="Adenylosuccinate synthetase">
    <location>
        <begin position="1"/>
        <end position="427"/>
    </location>
</feature>
<feature type="active site" description="Proton acceptor" evidence="2">
    <location>
        <position position="12"/>
    </location>
</feature>
<feature type="active site" description="Proton donor" evidence="2">
    <location>
        <position position="40"/>
    </location>
</feature>
<feature type="binding site" evidence="2">
    <location>
        <begin position="11"/>
        <end position="17"/>
    </location>
    <ligand>
        <name>GTP</name>
        <dbReference type="ChEBI" id="CHEBI:37565"/>
    </ligand>
</feature>
<feature type="binding site" description="in other chain" evidence="2">
    <location>
        <begin position="12"/>
        <end position="15"/>
    </location>
    <ligand>
        <name>IMP</name>
        <dbReference type="ChEBI" id="CHEBI:58053"/>
        <note>ligand shared between dimeric partners</note>
    </ligand>
</feature>
<feature type="binding site" evidence="2">
    <location>
        <position position="12"/>
    </location>
    <ligand>
        <name>Mg(2+)</name>
        <dbReference type="ChEBI" id="CHEBI:18420"/>
    </ligand>
</feature>
<feature type="binding site" description="in other chain" evidence="2">
    <location>
        <begin position="37"/>
        <end position="40"/>
    </location>
    <ligand>
        <name>IMP</name>
        <dbReference type="ChEBI" id="CHEBI:58053"/>
        <note>ligand shared between dimeric partners</note>
    </ligand>
</feature>
<feature type="binding site" evidence="2">
    <location>
        <begin position="39"/>
        <end position="41"/>
    </location>
    <ligand>
        <name>GTP</name>
        <dbReference type="ChEBI" id="CHEBI:37565"/>
    </ligand>
</feature>
<feature type="binding site" evidence="2">
    <location>
        <position position="39"/>
    </location>
    <ligand>
        <name>Mg(2+)</name>
        <dbReference type="ChEBI" id="CHEBI:18420"/>
    </ligand>
</feature>
<feature type="binding site" description="in other chain" evidence="2">
    <location>
        <position position="132"/>
    </location>
    <ligand>
        <name>IMP</name>
        <dbReference type="ChEBI" id="CHEBI:58053"/>
        <note>ligand shared between dimeric partners</note>
    </ligand>
</feature>
<feature type="binding site" evidence="2">
    <location>
        <position position="146"/>
    </location>
    <ligand>
        <name>IMP</name>
        <dbReference type="ChEBI" id="CHEBI:58053"/>
        <note>ligand shared between dimeric partners</note>
    </ligand>
</feature>
<feature type="binding site" description="in other chain" evidence="2">
    <location>
        <position position="223"/>
    </location>
    <ligand>
        <name>IMP</name>
        <dbReference type="ChEBI" id="CHEBI:58053"/>
        <note>ligand shared between dimeric partners</note>
    </ligand>
</feature>
<feature type="binding site" description="in other chain" evidence="2">
    <location>
        <position position="238"/>
    </location>
    <ligand>
        <name>IMP</name>
        <dbReference type="ChEBI" id="CHEBI:58053"/>
        <note>ligand shared between dimeric partners</note>
    </ligand>
</feature>
<feature type="binding site" evidence="2">
    <location>
        <begin position="298"/>
        <end position="304"/>
    </location>
    <ligand>
        <name>substrate</name>
    </ligand>
</feature>
<feature type="binding site" description="in other chain" evidence="2">
    <location>
        <position position="302"/>
    </location>
    <ligand>
        <name>IMP</name>
        <dbReference type="ChEBI" id="CHEBI:58053"/>
        <note>ligand shared between dimeric partners</note>
    </ligand>
</feature>
<feature type="binding site" evidence="2">
    <location>
        <position position="304"/>
    </location>
    <ligand>
        <name>GTP</name>
        <dbReference type="ChEBI" id="CHEBI:37565"/>
    </ligand>
</feature>
<feature type="binding site" evidence="2">
    <location>
        <begin position="330"/>
        <end position="332"/>
    </location>
    <ligand>
        <name>GTP</name>
        <dbReference type="ChEBI" id="CHEBI:37565"/>
    </ligand>
</feature>
<feature type="binding site" evidence="2">
    <location>
        <begin position="412"/>
        <end position="414"/>
    </location>
    <ligand>
        <name>GTP</name>
        <dbReference type="ChEBI" id="CHEBI:37565"/>
    </ligand>
</feature>
<name>PURA_DICDI</name>
<protein>
    <recommendedName>
        <fullName evidence="2">Adenylosuccinate synthetase</fullName>
        <shortName evidence="2">AMPSase</shortName>
        <shortName evidence="2">AdSS</shortName>
        <ecNumber evidence="2">6.3.4.4</ecNumber>
    </recommendedName>
    <alternativeName>
        <fullName evidence="2">IMP--aspartate ligase</fullName>
    </alternativeName>
</protein>
<comment type="function">
    <text evidence="1">Plays an important role in the de novo pathway and in the salvage pathway of purine nucleotide biosynthesis. Catalyzes the first committed step in the biosynthesis of AMP from IMP (By similarity).</text>
</comment>
<comment type="catalytic activity">
    <reaction evidence="2">
        <text>IMP + L-aspartate + GTP = N(6)-(1,2-dicarboxyethyl)-AMP + GDP + phosphate + 2 H(+)</text>
        <dbReference type="Rhea" id="RHEA:15753"/>
        <dbReference type="ChEBI" id="CHEBI:15378"/>
        <dbReference type="ChEBI" id="CHEBI:29991"/>
        <dbReference type="ChEBI" id="CHEBI:37565"/>
        <dbReference type="ChEBI" id="CHEBI:43474"/>
        <dbReference type="ChEBI" id="CHEBI:57567"/>
        <dbReference type="ChEBI" id="CHEBI:58053"/>
        <dbReference type="ChEBI" id="CHEBI:58189"/>
        <dbReference type="EC" id="6.3.4.4"/>
    </reaction>
</comment>
<comment type="cofactor">
    <cofactor evidence="2">
        <name>Mg(2+)</name>
        <dbReference type="ChEBI" id="CHEBI:18420"/>
    </cofactor>
    <text evidence="2">Binds 1 Mg(2+) ion per subunit.</text>
</comment>
<comment type="pathway">
    <text evidence="2">Purine metabolism; AMP biosynthesis via de novo pathway; AMP from IMP: step 1/2.</text>
</comment>
<comment type="subunit">
    <text evidence="2">Homodimer.</text>
</comment>
<comment type="subcellular location">
    <subcellularLocation>
        <location evidence="2">Cytoplasm</location>
    </subcellularLocation>
</comment>
<comment type="developmental stage">
    <text>Seen during growth but not during development.</text>
</comment>
<comment type="similarity">
    <text evidence="2">Belongs to the adenylosuccinate synthetase family.</text>
</comment>
<keyword id="KW-0963">Cytoplasm</keyword>
<keyword id="KW-0342">GTP-binding</keyword>
<keyword id="KW-0436">Ligase</keyword>
<keyword id="KW-0460">Magnesium</keyword>
<keyword id="KW-0479">Metal-binding</keyword>
<keyword id="KW-0547">Nucleotide-binding</keyword>
<keyword id="KW-0658">Purine biosynthesis</keyword>
<keyword id="KW-1185">Reference proteome</keyword>
<reference key="1">
    <citation type="journal article" date="1991" name="J. Biol. Chem.">
        <title>Purification and cDNA-derived sequence of adenylosuccinate synthetase from Dictyostelium discoideum.</title>
        <authorList>
            <person name="Wiesmueller L."/>
            <person name="Wittbrodt J."/>
            <person name="Noegel A.A."/>
            <person name="Schleicher M."/>
        </authorList>
    </citation>
    <scope>NUCLEOTIDE SEQUENCE [MRNA]</scope>
</reference>
<reference key="2">
    <citation type="journal article" date="2005" name="Nature">
        <title>The genome of the social amoeba Dictyostelium discoideum.</title>
        <authorList>
            <person name="Eichinger L."/>
            <person name="Pachebat J.A."/>
            <person name="Gloeckner G."/>
            <person name="Rajandream M.A."/>
            <person name="Sucgang R."/>
            <person name="Berriman M."/>
            <person name="Song J."/>
            <person name="Olsen R."/>
            <person name="Szafranski K."/>
            <person name="Xu Q."/>
            <person name="Tunggal B."/>
            <person name="Kummerfeld S."/>
            <person name="Madera M."/>
            <person name="Konfortov B.A."/>
            <person name="Rivero F."/>
            <person name="Bankier A.T."/>
            <person name="Lehmann R."/>
            <person name="Hamlin N."/>
            <person name="Davies R."/>
            <person name="Gaudet P."/>
            <person name="Fey P."/>
            <person name="Pilcher K."/>
            <person name="Chen G."/>
            <person name="Saunders D."/>
            <person name="Sodergren E.J."/>
            <person name="Davis P."/>
            <person name="Kerhornou A."/>
            <person name="Nie X."/>
            <person name="Hall N."/>
            <person name="Anjard C."/>
            <person name="Hemphill L."/>
            <person name="Bason N."/>
            <person name="Farbrother P."/>
            <person name="Desany B."/>
            <person name="Just E."/>
            <person name="Morio T."/>
            <person name="Rost R."/>
            <person name="Churcher C.M."/>
            <person name="Cooper J."/>
            <person name="Haydock S."/>
            <person name="van Driessche N."/>
            <person name="Cronin A."/>
            <person name="Goodhead I."/>
            <person name="Muzny D.M."/>
            <person name="Mourier T."/>
            <person name="Pain A."/>
            <person name="Lu M."/>
            <person name="Harper D."/>
            <person name="Lindsay R."/>
            <person name="Hauser H."/>
            <person name="James K.D."/>
            <person name="Quiles M."/>
            <person name="Madan Babu M."/>
            <person name="Saito T."/>
            <person name="Buchrieser C."/>
            <person name="Wardroper A."/>
            <person name="Felder M."/>
            <person name="Thangavelu M."/>
            <person name="Johnson D."/>
            <person name="Knights A."/>
            <person name="Loulseged H."/>
            <person name="Mungall K.L."/>
            <person name="Oliver K."/>
            <person name="Price C."/>
            <person name="Quail M.A."/>
            <person name="Urushihara H."/>
            <person name="Hernandez J."/>
            <person name="Rabbinowitsch E."/>
            <person name="Steffen D."/>
            <person name="Sanders M."/>
            <person name="Ma J."/>
            <person name="Kohara Y."/>
            <person name="Sharp S."/>
            <person name="Simmonds M.N."/>
            <person name="Spiegler S."/>
            <person name="Tivey A."/>
            <person name="Sugano S."/>
            <person name="White B."/>
            <person name="Walker D."/>
            <person name="Woodward J.R."/>
            <person name="Winckler T."/>
            <person name="Tanaka Y."/>
            <person name="Shaulsky G."/>
            <person name="Schleicher M."/>
            <person name="Weinstock G.M."/>
            <person name="Rosenthal A."/>
            <person name="Cox E.C."/>
            <person name="Chisholm R.L."/>
            <person name="Gibbs R.A."/>
            <person name="Loomis W.F."/>
            <person name="Platzer M."/>
            <person name="Kay R.R."/>
            <person name="Williams J.G."/>
            <person name="Dear P.H."/>
            <person name="Noegel A.A."/>
            <person name="Barrell B.G."/>
            <person name="Kuspa A."/>
        </authorList>
    </citation>
    <scope>NUCLEOTIDE SEQUENCE [LARGE SCALE GENOMIC DNA]</scope>
    <source>
        <strain>AX4</strain>
    </source>
</reference>
<reference key="3">
    <citation type="journal article" date="2006" name="Mol. Cell. Proteomics">
        <title>Proteomics fingerprinting of phagosome maturation and evidence for the role of a Galpha during uptake.</title>
        <authorList>
            <person name="Gotthardt D."/>
            <person name="Blancheteau V."/>
            <person name="Bosserhoff A."/>
            <person name="Ruppert T."/>
            <person name="Delorenzi M."/>
            <person name="Soldati T."/>
        </authorList>
    </citation>
    <scope>IDENTIFICATION BY MASS SPECTROMETRY [LARGE SCALE ANALYSIS]</scope>
    <source>
        <strain>AX2</strain>
    </source>
</reference>
<dbReference type="EC" id="6.3.4.4" evidence="2"/>
<dbReference type="EMBL" id="M58471">
    <property type="protein sequence ID" value="AAA33167.1"/>
    <property type="molecule type" value="mRNA"/>
</dbReference>
<dbReference type="EMBL" id="AAFI02000079">
    <property type="protein sequence ID" value="EAL64552.1"/>
    <property type="molecule type" value="Genomic_DNA"/>
</dbReference>
<dbReference type="PIR" id="A38617">
    <property type="entry name" value="AJDODS"/>
</dbReference>
<dbReference type="RefSeq" id="XP_638113.1">
    <property type="nucleotide sequence ID" value="XM_633021.1"/>
</dbReference>
<dbReference type="SMR" id="P21900"/>
<dbReference type="FunCoup" id="P21900">
    <property type="interactions" value="644"/>
</dbReference>
<dbReference type="STRING" id="44689.P21900"/>
<dbReference type="PaxDb" id="44689-DDB0201565"/>
<dbReference type="EnsemblProtists" id="EAL64552">
    <property type="protein sequence ID" value="EAL64552"/>
    <property type="gene ID" value="DDB_G0285429"/>
</dbReference>
<dbReference type="GeneID" id="8625161"/>
<dbReference type="KEGG" id="ddi:DDB_G0285429"/>
<dbReference type="dictyBase" id="DDB_G0285429">
    <property type="gene designation" value="purA"/>
</dbReference>
<dbReference type="VEuPathDB" id="AmoebaDB:DDB_G0285429"/>
<dbReference type="eggNOG" id="KOG1355">
    <property type="taxonomic scope" value="Eukaryota"/>
</dbReference>
<dbReference type="HOGENOM" id="CLU_029848_0_0_1"/>
<dbReference type="InParanoid" id="P21900"/>
<dbReference type="OMA" id="FHHAKPI"/>
<dbReference type="PhylomeDB" id="P21900"/>
<dbReference type="Reactome" id="R-DDI-73817">
    <property type="pathway name" value="Purine ribonucleoside monophosphate biosynthesis"/>
</dbReference>
<dbReference type="UniPathway" id="UPA00075">
    <property type="reaction ID" value="UER00335"/>
</dbReference>
<dbReference type="PRO" id="PR:P21900"/>
<dbReference type="Proteomes" id="UP000002195">
    <property type="component" value="Chromosome 4"/>
</dbReference>
<dbReference type="GO" id="GO:0005737">
    <property type="term" value="C:cytoplasm"/>
    <property type="evidence" value="ECO:0000318"/>
    <property type="project" value="GO_Central"/>
</dbReference>
<dbReference type="GO" id="GO:0005829">
    <property type="term" value="C:cytosol"/>
    <property type="evidence" value="ECO:0000314"/>
    <property type="project" value="dictyBase"/>
</dbReference>
<dbReference type="GO" id="GO:0045335">
    <property type="term" value="C:phagocytic vesicle"/>
    <property type="evidence" value="ECO:0007005"/>
    <property type="project" value="dictyBase"/>
</dbReference>
<dbReference type="GO" id="GO:0004019">
    <property type="term" value="F:adenylosuccinate synthase activity"/>
    <property type="evidence" value="ECO:0000314"/>
    <property type="project" value="dictyBase"/>
</dbReference>
<dbReference type="GO" id="GO:0005525">
    <property type="term" value="F:GTP binding"/>
    <property type="evidence" value="ECO:0000314"/>
    <property type="project" value="dictyBase"/>
</dbReference>
<dbReference type="GO" id="GO:0000287">
    <property type="term" value="F:magnesium ion binding"/>
    <property type="evidence" value="ECO:0007669"/>
    <property type="project" value="UniProtKB-UniRule"/>
</dbReference>
<dbReference type="GO" id="GO:0044208">
    <property type="term" value="P:'de novo' AMP biosynthetic process"/>
    <property type="evidence" value="ECO:0000318"/>
    <property type="project" value="GO_Central"/>
</dbReference>
<dbReference type="GO" id="GO:0046086">
    <property type="term" value="P:adenosine biosynthetic process"/>
    <property type="evidence" value="ECO:0000250"/>
    <property type="project" value="dictyBase"/>
</dbReference>
<dbReference type="GO" id="GO:0046040">
    <property type="term" value="P:IMP metabolic process"/>
    <property type="evidence" value="ECO:0000318"/>
    <property type="project" value="GO_Central"/>
</dbReference>
<dbReference type="GO" id="GO:0006164">
    <property type="term" value="P:purine nucleotide biosynthetic process"/>
    <property type="evidence" value="ECO:0000250"/>
    <property type="project" value="dictyBase"/>
</dbReference>
<dbReference type="CDD" id="cd03108">
    <property type="entry name" value="AdSS"/>
    <property type="match status" value="1"/>
</dbReference>
<dbReference type="FunFam" id="3.90.170.10:FF:000001">
    <property type="entry name" value="Adenylosuccinate synthetase"/>
    <property type="match status" value="1"/>
</dbReference>
<dbReference type="FunFam" id="1.10.300.10:FF:000002">
    <property type="entry name" value="Adenylosuccinate synthetase, chloroplastic"/>
    <property type="match status" value="1"/>
</dbReference>
<dbReference type="Gene3D" id="3.40.440.10">
    <property type="entry name" value="Adenylosuccinate Synthetase, subunit A, domain 1"/>
    <property type="match status" value="1"/>
</dbReference>
<dbReference type="Gene3D" id="1.10.300.10">
    <property type="entry name" value="Adenylosuccinate Synthetase, subunit A, domain 2"/>
    <property type="match status" value="1"/>
</dbReference>
<dbReference type="Gene3D" id="3.90.170.10">
    <property type="entry name" value="Adenylosuccinate Synthetase, subunit A, domain 3"/>
    <property type="match status" value="1"/>
</dbReference>
<dbReference type="HAMAP" id="MF_00011">
    <property type="entry name" value="Adenylosucc_synth"/>
    <property type="match status" value="1"/>
</dbReference>
<dbReference type="InterPro" id="IPR018220">
    <property type="entry name" value="Adenylosuccin_syn_GTP-bd"/>
</dbReference>
<dbReference type="InterPro" id="IPR033128">
    <property type="entry name" value="Adenylosuccin_syn_Lys_AS"/>
</dbReference>
<dbReference type="InterPro" id="IPR042109">
    <property type="entry name" value="Adenylosuccinate_synth_dom1"/>
</dbReference>
<dbReference type="InterPro" id="IPR042110">
    <property type="entry name" value="Adenylosuccinate_synth_dom2"/>
</dbReference>
<dbReference type="InterPro" id="IPR042111">
    <property type="entry name" value="Adenylosuccinate_synth_dom3"/>
</dbReference>
<dbReference type="InterPro" id="IPR001114">
    <property type="entry name" value="Adenylosuccinate_synthetase"/>
</dbReference>
<dbReference type="InterPro" id="IPR027417">
    <property type="entry name" value="P-loop_NTPase"/>
</dbReference>
<dbReference type="NCBIfam" id="NF002223">
    <property type="entry name" value="PRK01117.1"/>
    <property type="match status" value="1"/>
</dbReference>
<dbReference type="NCBIfam" id="TIGR00184">
    <property type="entry name" value="purA"/>
    <property type="match status" value="1"/>
</dbReference>
<dbReference type="PANTHER" id="PTHR11846">
    <property type="entry name" value="ADENYLOSUCCINATE SYNTHETASE"/>
    <property type="match status" value="1"/>
</dbReference>
<dbReference type="PANTHER" id="PTHR11846:SF0">
    <property type="entry name" value="ADENYLOSUCCINATE SYNTHETASE"/>
    <property type="match status" value="1"/>
</dbReference>
<dbReference type="Pfam" id="PF00709">
    <property type="entry name" value="Adenylsucc_synt"/>
    <property type="match status" value="1"/>
</dbReference>
<dbReference type="SMART" id="SM00788">
    <property type="entry name" value="Adenylsucc_synt"/>
    <property type="match status" value="1"/>
</dbReference>
<dbReference type="SUPFAM" id="SSF52540">
    <property type="entry name" value="P-loop containing nucleoside triphosphate hydrolases"/>
    <property type="match status" value="1"/>
</dbReference>
<dbReference type="PROSITE" id="PS01266">
    <property type="entry name" value="ADENYLOSUCCIN_SYN_1"/>
    <property type="match status" value="1"/>
</dbReference>
<dbReference type="PROSITE" id="PS00513">
    <property type="entry name" value="ADENYLOSUCCIN_SYN_2"/>
    <property type="match status" value="1"/>
</dbReference>
<organism>
    <name type="scientific">Dictyostelium discoideum</name>
    <name type="common">Social amoeba</name>
    <dbReference type="NCBI Taxonomy" id="44689"/>
    <lineage>
        <taxon>Eukaryota</taxon>
        <taxon>Amoebozoa</taxon>
        <taxon>Evosea</taxon>
        <taxon>Eumycetozoa</taxon>
        <taxon>Dictyostelia</taxon>
        <taxon>Dictyosteliales</taxon>
        <taxon>Dictyosteliaceae</taxon>
        <taxon>Dictyostelium</taxon>
    </lineage>
</organism>
<sequence>MASIIIGSQWGDEGKGKLVDILSQQFDVVARCQGGANAGHTIVVDGKKIALHLIPSGILNEKASCILGNGMVIHLPTFFKEVQGLQDKGINYKGRLFVSDRAHLVFDLHQMIDAMKEAELSNGTSNDSIGTTKRGIGPCYSSKASRGGLRVCDLYSPEHFRKTFTRLVENKHKRFGSFEYDVEAELKRYQEFAEMLKPFVIDSVYYLNQAFKDGKKVLIEGAQSTMLDLDFGCYPYVTSSASSVGGACTGLGISPNKVVTQIGVVKAYTTKVGSGPFPTEQNDHVGDSLRKAGSEFGTTTGRPRRIGWLDAVVLRYTSMINDFTRLNLTKLDVLSDFEEIKIGVDYKYKGETIKSFPASLETLAQCEVVYESFPGWKCDLSHVTEYDQLPIQAKNYIKRIEELVGVPIVYIGVGVERKNLIERKELI</sequence>
<accession>P21900</accession>
<accession>Q54N30</accession>